<keyword id="KW-0150">Chloroplast</keyword>
<keyword id="KW-0934">Plastid</keyword>
<keyword id="KW-0687">Ribonucleoprotein</keyword>
<keyword id="KW-0689">Ribosomal protein</keyword>
<organism>
    <name type="scientific">Porphyra purpurea</name>
    <name type="common">Red seaweed</name>
    <name type="synonym">Ulva purpurea</name>
    <dbReference type="NCBI Taxonomy" id="2787"/>
    <lineage>
        <taxon>Eukaryota</taxon>
        <taxon>Rhodophyta</taxon>
        <taxon>Bangiophyceae</taxon>
        <taxon>Bangiales</taxon>
        <taxon>Bangiaceae</taxon>
        <taxon>Porphyra</taxon>
    </lineage>
</organism>
<gene>
    <name type="primary">rpl36</name>
</gene>
<comment type="subcellular location">
    <subcellularLocation>
        <location>Plastid</location>
        <location>Chloroplast</location>
    </subcellularLocation>
</comment>
<comment type="similarity">
    <text evidence="1">Belongs to the bacterial ribosomal protein bL36 family.</text>
</comment>
<geneLocation type="chloroplast"/>
<accession>P51296</accession>
<name>RK36_PORPU</name>
<reference key="1">
    <citation type="journal article" date="1995" name="Plant Mol. Biol. Rep.">
        <title>Complete nucleotide sequence of the Porphyra purpurea chloroplast genome.</title>
        <authorList>
            <person name="Reith M.E."/>
            <person name="Munholland J."/>
        </authorList>
    </citation>
    <scope>NUCLEOTIDE SEQUENCE [LARGE SCALE GENOMIC DNA]</scope>
    <source>
        <strain>Avonport</strain>
    </source>
</reference>
<evidence type="ECO:0000305" key="1"/>
<dbReference type="EMBL" id="U38804">
    <property type="protein sequence ID" value="AAC08182.1"/>
    <property type="molecule type" value="Genomic_DNA"/>
</dbReference>
<dbReference type="PIR" id="S73217">
    <property type="entry name" value="S73217"/>
</dbReference>
<dbReference type="RefSeq" id="NP_053906.1">
    <property type="nucleotide sequence ID" value="NC_000925.1"/>
</dbReference>
<dbReference type="SMR" id="P51296"/>
<dbReference type="GeneID" id="809925"/>
<dbReference type="GO" id="GO:0009507">
    <property type="term" value="C:chloroplast"/>
    <property type="evidence" value="ECO:0007669"/>
    <property type="project" value="UniProtKB-SubCell"/>
</dbReference>
<dbReference type="GO" id="GO:1990904">
    <property type="term" value="C:ribonucleoprotein complex"/>
    <property type="evidence" value="ECO:0007669"/>
    <property type="project" value="UniProtKB-KW"/>
</dbReference>
<dbReference type="GO" id="GO:0005840">
    <property type="term" value="C:ribosome"/>
    <property type="evidence" value="ECO:0007669"/>
    <property type="project" value="UniProtKB-KW"/>
</dbReference>
<dbReference type="GO" id="GO:0003735">
    <property type="term" value="F:structural constituent of ribosome"/>
    <property type="evidence" value="ECO:0007669"/>
    <property type="project" value="InterPro"/>
</dbReference>
<dbReference type="GO" id="GO:0006412">
    <property type="term" value="P:translation"/>
    <property type="evidence" value="ECO:0007669"/>
    <property type="project" value="UniProtKB-UniRule"/>
</dbReference>
<dbReference type="HAMAP" id="MF_00251">
    <property type="entry name" value="Ribosomal_bL36"/>
    <property type="match status" value="1"/>
</dbReference>
<dbReference type="InterPro" id="IPR000473">
    <property type="entry name" value="Ribosomal_bL36"/>
</dbReference>
<dbReference type="InterPro" id="IPR035977">
    <property type="entry name" value="Ribosomal_bL36_sp"/>
</dbReference>
<dbReference type="NCBIfam" id="TIGR01022">
    <property type="entry name" value="rpmJ_bact"/>
    <property type="match status" value="1"/>
</dbReference>
<dbReference type="PANTHER" id="PTHR42888">
    <property type="entry name" value="50S RIBOSOMAL PROTEIN L36, CHLOROPLASTIC"/>
    <property type="match status" value="1"/>
</dbReference>
<dbReference type="PANTHER" id="PTHR42888:SF1">
    <property type="entry name" value="LARGE RIBOSOMAL SUBUNIT PROTEIN BL36C"/>
    <property type="match status" value="1"/>
</dbReference>
<dbReference type="Pfam" id="PF00444">
    <property type="entry name" value="Ribosomal_L36"/>
    <property type="match status" value="1"/>
</dbReference>
<dbReference type="SUPFAM" id="SSF57840">
    <property type="entry name" value="Ribosomal protein L36"/>
    <property type="match status" value="1"/>
</dbReference>
<dbReference type="PROSITE" id="PS00828">
    <property type="entry name" value="RIBOSOMAL_L36"/>
    <property type="match status" value="1"/>
</dbReference>
<protein>
    <recommendedName>
        <fullName evidence="1">Large ribosomal subunit protein bL36c</fullName>
    </recommendedName>
    <alternativeName>
        <fullName>50S ribosomal protein L36, chloroplastic</fullName>
    </alternativeName>
</protein>
<proteinExistence type="inferred from homology"/>
<feature type="chain" id="PRO_0000126341" description="Large ribosomal subunit protein bL36c">
    <location>
        <begin position="1"/>
        <end position="37"/>
    </location>
</feature>
<sequence length="37" mass="4546">MKVRPSVRKMCEKCRIIRRHRKVMVICNNPKHKQRQG</sequence>